<name>RNC_GEOTN</name>
<protein>
    <recommendedName>
        <fullName evidence="1">Ribonuclease 3</fullName>
        <ecNumber evidence="1">3.1.26.3</ecNumber>
    </recommendedName>
    <alternativeName>
        <fullName evidence="1">Ribonuclease III</fullName>
        <shortName evidence="1">RNase III</shortName>
    </alternativeName>
</protein>
<accession>A4IM67</accession>
<reference key="1">
    <citation type="journal article" date="2007" name="Proc. Natl. Acad. Sci. U.S.A.">
        <title>Genome and proteome of long-chain alkane degrading Geobacillus thermodenitrificans NG80-2 isolated from a deep-subsurface oil reservoir.</title>
        <authorList>
            <person name="Feng L."/>
            <person name="Wang W."/>
            <person name="Cheng J."/>
            <person name="Ren Y."/>
            <person name="Zhao G."/>
            <person name="Gao C."/>
            <person name="Tang Y."/>
            <person name="Liu X."/>
            <person name="Han W."/>
            <person name="Peng X."/>
            <person name="Liu R."/>
            <person name="Wang L."/>
        </authorList>
    </citation>
    <scope>NUCLEOTIDE SEQUENCE [LARGE SCALE GENOMIC DNA]</scope>
    <source>
        <strain>NG80-2</strain>
    </source>
</reference>
<organism>
    <name type="scientific">Geobacillus thermodenitrificans (strain NG80-2)</name>
    <dbReference type="NCBI Taxonomy" id="420246"/>
    <lineage>
        <taxon>Bacteria</taxon>
        <taxon>Bacillati</taxon>
        <taxon>Bacillota</taxon>
        <taxon>Bacilli</taxon>
        <taxon>Bacillales</taxon>
        <taxon>Anoxybacillaceae</taxon>
        <taxon>Geobacillus</taxon>
    </lineage>
</organism>
<dbReference type="EC" id="3.1.26.3" evidence="1"/>
<dbReference type="EMBL" id="CP000557">
    <property type="protein sequence ID" value="ABO66421.1"/>
    <property type="molecule type" value="Genomic_DNA"/>
</dbReference>
<dbReference type="RefSeq" id="WP_008878619.1">
    <property type="nucleotide sequence ID" value="NC_009328.1"/>
</dbReference>
<dbReference type="SMR" id="A4IM67"/>
<dbReference type="GeneID" id="87621362"/>
<dbReference type="KEGG" id="gtn:GTNG_1045"/>
<dbReference type="eggNOG" id="COG0571">
    <property type="taxonomic scope" value="Bacteria"/>
</dbReference>
<dbReference type="HOGENOM" id="CLU_000907_1_3_9"/>
<dbReference type="Proteomes" id="UP000001578">
    <property type="component" value="Chromosome"/>
</dbReference>
<dbReference type="GO" id="GO:0005737">
    <property type="term" value="C:cytoplasm"/>
    <property type="evidence" value="ECO:0007669"/>
    <property type="project" value="UniProtKB-SubCell"/>
</dbReference>
<dbReference type="GO" id="GO:0003725">
    <property type="term" value="F:double-stranded RNA binding"/>
    <property type="evidence" value="ECO:0007669"/>
    <property type="project" value="TreeGrafter"/>
</dbReference>
<dbReference type="GO" id="GO:0046872">
    <property type="term" value="F:metal ion binding"/>
    <property type="evidence" value="ECO:0007669"/>
    <property type="project" value="UniProtKB-KW"/>
</dbReference>
<dbReference type="GO" id="GO:0004525">
    <property type="term" value="F:ribonuclease III activity"/>
    <property type="evidence" value="ECO:0007669"/>
    <property type="project" value="UniProtKB-UniRule"/>
</dbReference>
<dbReference type="GO" id="GO:0019843">
    <property type="term" value="F:rRNA binding"/>
    <property type="evidence" value="ECO:0007669"/>
    <property type="project" value="UniProtKB-KW"/>
</dbReference>
<dbReference type="GO" id="GO:0006397">
    <property type="term" value="P:mRNA processing"/>
    <property type="evidence" value="ECO:0007669"/>
    <property type="project" value="UniProtKB-UniRule"/>
</dbReference>
<dbReference type="GO" id="GO:0010468">
    <property type="term" value="P:regulation of gene expression"/>
    <property type="evidence" value="ECO:0007669"/>
    <property type="project" value="TreeGrafter"/>
</dbReference>
<dbReference type="GO" id="GO:0006364">
    <property type="term" value="P:rRNA processing"/>
    <property type="evidence" value="ECO:0007669"/>
    <property type="project" value="UniProtKB-UniRule"/>
</dbReference>
<dbReference type="GO" id="GO:0008033">
    <property type="term" value="P:tRNA processing"/>
    <property type="evidence" value="ECO:0007669"/>
    <property type="project" value="UniProtKB-KW"/>
</dbReference>
<dbReference type="CDD" id="cd10845">
    <property type="entry name" value="DSRM_RNAse_III_family"/>
    <property type="match status" value="1"/>
</dbReference>
<dbReference type="CDD" id="cd00593">
    <property type="entry name" value="RIBOc"/>
    <property type="match status" value="1"/>
</dbReference>
<dbReference type="FunFam" id="1.10.1520.10:FF:000001">
    <property type="entry name" value="Ribonuclease 3"/>
    <property type="match status" value="1"/>
</dbReference>
<dbReference type="FunFam" id="3.30.160.20:FF:000003">
    <property type="entry name" value="Ribonuclease 3"/>
    <property type="match status" value="1"/>
</dbReference>
<dbReference type="Gene3D" id="3.30.160.20">
    <property type="match status" value="1"/>
</dbReference>
<dbReference type="Gene3D" id="1.10.1520.10">
    <property type="entry name" value="Ribonuclease III domain"/>
    <property type="match status" value="1"/>
</dbReference>
<dbReference type="HAMAP" id="MF_00104">
    <property type="entry name" value="RNase_III"/>
    <property type="match status" value="1"/>
</dbReference>
<dbReference type="InterPro" id="IPR014720">
    <property type="entry name" value="dsRBD_dom"/>
</dbReference>
<dbReference type="InterPro" id="IPR011907">
    <property type="entry name" value="RNase_III"/>
</dbReference>
<dbReference type="InterPro" id="IPR000999">
    <property type="entry name" value="RNase_III_dom"/>
</dbReference>
<dbReference type="InterPro" id="IPR036389">
    <property type="entry name" value="RNase_III_sf"/>
</dbReference>
<dbReference type="NCBIfam" id="TIGR02191">
    <property type="entry name" value="RNaseIII"/>
    <property type="match status" value="1"/>
</dbReference>
<dbReference type="PANTHER" id="PTHR11207:SF0">
    <property type="entry name" value="RIBONUCLEASE 3"/>
    <property type="match status" value="1"/>
</dbReference>
<dbReference type="PANTHER" id="PTHR11207">
    <property type="entry name" value="RIBONUCLEASE III"/>
    <property type="match status" value="1"/>
</dbReference>
<dbReference type="Pfam" id="PF00035">
    <property type="entry name" value="dsrm"/>
    <property type="match status" value="1"/>
</dbReference>
<dbReference type="Pfam" id="PF14622">
    <property type="entry name" value="Ribonucleas_3_3"/>
    <property type="match status" value="1"/>
</dbReference>
<dbReference type="SMART" id="SM00358">
    <property type="entry name" value="DSRM"/>
    <property type="match status" value="1"/>
</dbReference>
<dbReference type="SMART" id="SM00535">
    <property type="entry name" value="RIBOc"/>
    <property type="match status" value="1"/>
</dbReference>
<dbReference type="SUPFAM" id="SSF54768">
    <property type="entry name" value="dsRNA-binding domain-like"/>
    <property type="match status" value="1"/>
</dbReference>
<dbReference type="SUPFAM" id="SSF69065">
    <property type="entry name" value="RNase III domain-like"/>
    <property type="match status" value="1"/>
</dbReference>
<dbReference type="PROSITE" id="PS50137">
    <property type="entry name" value="DS_RBD"/>
    <property type="match status" value="1"/>
</dbReference>
<dbReference type="PROSITE" id="PS00517">
    <property type="entry name" value="RNASE_3_1"/>
    <property type="match status" value="1"/>
</dbReference>
<dbReference type="PROSITE" id="PS50142">
    <property type="entry name" value="RNASE_3_2"/>
    <property type="match status" value="1"/>
</dbReference>
<feature type="chain" id="PRO_1000075760" description="Ribonuclease 3">
    <location>
        <begin position="1"/>
        <end position="246"/>
    </location>
</feature>
<feature type="domain" description="RNase III" evidence="1">
    <location>
        <begin position="18"/>
        <end position="147"/>
    </location>
</feature>
<feature type="domain" description="DRBM" evidence="1">
    <location>
        <begin position="173"/>
        <end position="242"/>
    </location>
</feature>
<feature type="active site" evidence="1">
    <location>
        <position position="64"/>
    </location>
</feature>
<feature type="active site" evidence="1">
    <location>
        <position position="136"/>
    </location>
</feature>
<feature type="binding site" evidence="1">
    <location>
        <position position="60"/>
    </location>
    <ligand>
        <name>Mg(2+)</name>
        <dbReference type="ChEBI" id="CHEBI:18420"/>
    </ligand>
</feature>
<feature type="binding site" evidence="1">
    <location>
        <position position="133"/>
    </location>
    <ligand>
        <name>Mg(2+)</name>
        <dbReference type="ChEBI" id="CHEBI:18420"/>
    </ligand>
</feature>
<feature type="binding site" evidence="1">
    <location>
        <position position="136"/>
    </location>
    <ligand>
        <name>Mg(2+)</name>
        <dbReference type="ChEBI" id="CHEBI:18420"/>
    </ligand>
</feature>
<comment type="function">
    <text evidence="1">Digests double-stranded RNA. Involved in the processing of primary rRNA transcript to yield the immediate precursors to the large and small rRNAs (23S and 16S). Processes some mRNAs, and tRNAs when they are encoded in the rRNA operon. Processes pre-crRNA and tracrRNA of type II CRISPR loci if present in the organism.</text>
</comment>
<comment type="catalytic activity">
    <reaction evidence="1">
        <text>Endonucleolytic cleavage to 5'-phosphomonoester.</text>
        <dbReference type="EC" id="3.1.26.3"/>
    </reaction>
</comment>
<comment type="cofactor">
    <cofactor evidence="1">
        <name>Mg(2+)</name>
        <dbReference type="ChEBI" id="CHEBI:18420"/>
    </cofactor>
</comment>
<comment type="subunit">
    <text evidence="1">Homodimer.</text>
</comment>
<comment type="subcellular location">
    <subcellularLocation>
        <location evidence="1">Cytoplasm</location>
    </subcellularLocation>
</comment>
<comment type="similarity">
    <text evidence="1">Belongs to the ribonuclease III family.</text>
</comment>
<proteinExistence type="inferred from homology"/>
<sequence length="246" mass="27803">MSKQRDKGRIYEKRRAKFQELQKKIGITFQNEKLLIQAFTHSSYVNEHRRRFHEDNERLEFLGDAVLELTVSQYLFQKFPHMSEGQLTKLRAAIVCEPSLVKFANALSFGELVLLGKGEELTGGRTRPALLADVFEAFIGALYLDQGMDVVLRFLGQTMFPKIDEGAFSHVMDFKSQLQELVQRDGSGTLEYAILEEKGPAHNKEFVARVALNGQELGVGVGRSKKEAEQHAAQMALETLRAADKQ</sequence>
<keyword id="KW-0963">Cytoplasm</keyword>
<keyword id="KW-0255">Endonuclease</keyword>
<keyword id="KW-0378">Hydrolase</keyword>
<keyword id="KW-0460">Magnesium</keyword>
<keyword id="KW-0479">Metal-binding</keyword>
<keyword id="KW-0507">mRNA processing</keyword>
<keyword id="KW-0540">Nuclease</keyword>
<keyword id="KW-0694">RNA-binding</keyword>
<keyword id="KW-0698">rRNA processing</keyword>
<keyword id="KW-0699">rRNA-binding</keyword>
<keyword id="KW-0819">tRNA processing</keyword>
<gene>
    <name evidence="1" type="primary">rnc</name>
    <name type="ordered locus">GTNG_1045</name>
</gene>
<evidence type="ECO:0000255" key="1">
    <source>
        <dbReference type="HAMAP-Rule" id="MF_00104"/>
    </source>
</evidence>